<protein>
    <recommendedName>
        <fullName>U3-theraphotoxin-Hhn1a 10</fullName>
        <shortName>U3-TRTX-Hhn1a</shortName>
    </recommendedName>
    <alternativeName>
        <fullName>Hainantoxin-VIII.10</fullName>
        <shortName>HNTX-VIII.10</shortName>
    </alternativeName>
    <alternativeName>
        <fullName>Peptide F4-27.90</fullName>
    </alternativeName>
</protein>
<accession>D2Y2G5</accession>
<sequence length="87" mass="10156">MVNMEASMFLTFAGLVLLFVVCYASESEEKEFPKEMLSSIFAVDNDFKQEERDCAGYMRECKEKLCCSGYVCSSRWKWCVLPAPWRR</sequence>
<keyword id="KW-0903">Direct protein sequencing</keyword>
<keyword id="KW-1015">Disulfide bond</keyword>
<keyword id="KW-0872">Ion channel impairing toxin</keyword>
<keyword id="KW-0960">Knottin</keyword>
<keyword id="KW-0964">Secreted</keyword>
<keyword id="KW-0732">Signal</keyword>
<keyword id="KW-0800">Toxin</keyword>
<name>H8A10_CYRHA</name>
<comment type="function">
    <text evidence="1">Ion channel inhibitor.</text>
</comment>
<comment type="subcellular location">
    <subcellularLocation>
        <location>Secreted</location>
    </subcellularLocation>
</comment>
<comment type="tissue specificity">
    <text>Expressed by the venom gland.</text>
</comment>
<comment type="domain">
    <text evidence="1">The presence of a 'disulfide through disulfide knot' structurally defines this protein as a knottin.</text>
</comment>
<comment type="similarity">
    <text evidence="5">Belongs to the neurotoxin 10 (Hwtx-1) family. 51 (Hntx-8) subfamily. Hntx-8 sub-subfamily.</text>
</comment>
<feature type="signal peptide" evidence="3">
    <location>
        <begin position="1"/>
        <end position="24"/>
    </location>
</feature>
<feature type="propeptide" id="PRO_0000400597" evidence="4">
    <location>
        <begin position="25"/>
        <end position="52"/>
    </location>
</feature>
<feature type="peptide" id="PRO_0000400598" description="U3-theraphotoxin-Hhn1a 10">
    <location>
        <begin position="53"/>
        <end position="87"/>
    </location>
</feature>
<feature type="disulfide bond" evidence="2">
    <location>
        <begin position="54"/>
        <end position="67"/>
    </location>
</feature>
<feature type="disulfide bond" evidence="2">
    <location>
        <begin position="61"/>
        <end position="72"/>
    </location>
</feature>
<feature type="disulfide bond" evidence="2">
    <location>
        <begin position="66"/>
        <end position="79"/>
    </location>
</feature>
<dbReference type="EMBL" id="GU293042">
    <property type="protein sequence ID" value="ADB56858.1"/>
    <property type="molecule type" value="mRNA"/>
</dbReference>
<dbReference type="SMR" id="D2Y2G5"/>
<dbReference type="ArachnoServer" id="AS001657">
    <property type="toxin name" value="U3-theraphotoxin-Hhn1a"/>
</dbReference>
<dbReference type="GO" id="GO:0005576">
    <property type="term" value="C:extracellular region"/>
    <property type="evidence" value="ECO:0007669"/>
    <property type="project" value="UniProtKB-SubCell"/>
</dbReference>
<dbReference type="GO" id="GO:0008200">
    <property type="term" value="F:ion channel inhibitor activity"/>
    <property type="evidence" value="ECO:0007669"/>
    <property type="project" value="InterPro"/>
</dbReference>
<dbReference type="GO" id="GO:0090729">
    <property type="term" value="F:toxin activity"/>
    <property type="evidence" value="ECO:0007669"/>
    <property type="project" value="UniProtKB-KW"/>
</dbReference>
<dbReference type="InterPro" id="IPR011696">
    <property type="entry name" value="Huwentoxin-1"/>
</dbReference>
<dbReference type="InterPro" id="IPR013140">
    <property type="entry name" value="Huwentoxin_CS1"/>
</dbReference>
<dbReference type="Pfam" id="PF07740">
    <property type="entry name" value="Toxin_12"/>
    <property type="match status" value="1"/>
</dbReference>
<dbReference type="SUPFAM" id="SSF57059">
    <property type="entry name" value="omega toxin-like"/>
    <property type="match status" value="1"/>
</dbReference>
<dbReference type="PROSITE" id="PS60021">
    <property type="entry name" value="HWTX_1"/>
    <property type="match status" value="1"/>
</dbReference>
<proteinExistence type="evidence at protein level"/>
<evidence type="ECO:0000250" key="1"/>
<evidence type="ECO:0000250" key="2">
    <source>
        <dbReference type="UniProtKB" id="B3FIS6"/>
    </source>
</evidence>
<evidence type="ECO:0000255" key="3"/>
<evidence type="ECO:0000269" key="4">
    <source>
    </source>
</evidence>
<evidence type="ECO:0000305" key="5"/>
<reference key="1">
    <citation type="journal article" date="2010" name="J. Proteome Res.">
        <title>Molecular diversification of peptide toxins from the tarantula Haplopelma hainanum (Ornithoctonus hainana) venom based on transcriptomic, peptidomic, and genomic analyses.</title>
        <authorList>
            <person name="Tang X."/>
            <person name="Zhang Y."/>
            <person name="Hu W."/>
            <person name="Xu D."/>
            <person name="Tao H."/>
            <person name="Yang X."/>
            <person name="Li Y."/>
            <person name="Jiang L."/>
            <person name="Liang S."/>
        </authorList>
    </citation>
    <scope>NUCLEOTIDE SEQUENCE [LARGE SCALE MRNA]</scope>
    <scope>PROTEIN SEQUENCE OF 53-85</scope>
    <scope>IDENTIFICATION BY MASS SPECTROMETRY</scope>
    <source>
        <tissue>Venom</tissue>
        <tissue>Venom gland</tissue>
    </source>
</reference>
<organism>
    <name type="scientific">Cyriopagopus hainanus</name>
    <name type="common">Chinese bird spider</name>
    <name type="synonym">Haplopelma hainanum</name>
    <dbReference type="NCBI Taxonomy" id="209901"/>
    <lineage>
        <taxon>Eukaryota</taxon>
        <taxon>Metazoa</taxon>
        <taxon>Ecdysozoa</taxon>
        <taxon>Arthropoda</taxon>
        <taxon>Chelicerata</taxon>
        <taxon>Arachnida</taxon>
        <taxon>Araneae</taxon>
        <taxon>Mygalomorphae</taxon>
        <taxon>Theraphosidae</taxon>
        <taxon>Haplopelma</taxon>
    </lineage>
</organism>